<accession>A7MZA8</accession>
<gene>
    <name evidence="1" type="primary">rnc</name>
    <name type="ordered locus">VIBHAR_03536</name>
</gene>
<proteinExistence type="inferred from homology"/>
<evidence type="ECO:0000255" key="1">
    <source>
        <dbReference type="HAMAP-Rule" id="MF_00104"/>
    </source>
</evidence>
<keyword id="KW-0963">Cytoplasm</keyword>
<keyword id="KW-0255">Endonuclease</keyword>
<keyword id="KW-0378">Hydrolase</keyword>
<keyword id="KW-0460">Magnesium</keyword>
<keyword id="KW-0479">Metal-binding</keyword>
<keyword id="KW-0507">mRNA processing</keyword>
<keyword id="KW-0540">Nuclease</keyword>
<keyword id="KW-0694">RNA-binding</keyword>
<keyword id="KW-0698">rRNA processing</keyword>
<keyword id="KW-0699">rRNA-binding</keyword>
<keyword id="KW-0819">tRNA processing</keyword>
<comment type="function">
    <text evidence="1">Digests double-stranded RNA. Involved in the processing of primary rRNA transcript to yield the immediate precursors to the large and small rRNAs (23S and 16S). Processes some mRNAs, and tRNAs when they are encoded in the rRNA operon. Processes pre-crRNA and tracrRNA of type II CRISPR loci if present in the organism.</text>
</comment>
<comment type="catalytic activity">
    <reaction evidence="1">
        <text>Endonucleolytic cleavage to 5'-phosphomonoester.</text>
        <dbReference type="EC" id="3.1.26.3"/>
    </reaction>
</comment>
<comment type="cofactor">
    <cofactor evidence="1">
        <name>Mg(2+)</name>
        <dbReference type="ChEBI" id="CHEBI:18420"/>
    </cofactor>
</comment>
<comment type="subunit">
    <text evidence="1">Homodimer.</text>
</comment>
<comment type="subcellular location">
    <subcellularLocation>
        <location evidence="1">Cytoplasm</location>
    </subcellularLocation>
</comment>
<comment type="similarity">
    <text evidence="1">Belongs to the ribonuclease III family.</text>
</comment>
<sequence length="225" mass="24966">MNSPIDKLERKLGYQFKDAGLINLALTHRSANSKHNERLEFLGDSILSFVIADDLYHRFPKVNEGDMSRMRATLVRGHTLAELGREFDLGDYLKLGPGELKSGGFRRDSILADAVEAIIGAIYLDSDIEAVRGIVLSWYNSRLEAIKPGVSQKDPKTRLQEFLQGRRKPLPVYTVTNIKGEAHNQEFTVECDVAGVDKPVIGKGTSRRKAEQAAAETALEQLTNG</sequence>
<dbReference type="EC" id="3.1.26.3" evidence="1"/>
<dbReference type="EMBL" id="CP000789">
    <property type="protein sequence ID" value="ABU72472.1"/>
    <property type="molecule type" value="Genomic_DNA"/>
</dbReference>
<dbReference type="RefSeq" id="WP_005436448.1">
    <property type="nucleotide sequence ID" value="NC_022269.1"/>
</dbReference>
<dbReference type="SMR" id="A7MZA8"/>
<dbReference type="GeneID" id="47100324"/>
<dbReference type="KEGG" id="vha:VIBHAR_03536"/>
<dbReference type="PATRIC" id="fig|338187.25.peg.2674"/>
<dbReference type="Proteomes" id="UP000008152">
    <property type="component" value="Chromosome I"/>
</dbReference>
<dbReference type="GO" id="GO:0005737">
    <property type="term" value="C:cytoplasm"/>
    <property type="evidence" value="ECO:0007669"/>
    <property type="project" value="UniProtKB-SubCell"/>
</dbReference>
<dbReference type="GO" id="GO:0003725">
    <property type="term" value="F:double-stranded RNA binding"/>
    <property type="evidence" value="ECO:0007669"/>
    <property type="project" value="TreeGrafter"/>
</dbReference>
<dbReference type="GO" id="GO:0046872">
    <property type="term" value="F:metal ion binding"/>
    <property type="evidence" value="ECO:0007669"/>
    <property type="project" value="UniProtKB-KW"/>
</dbReference>
<dbReference type="GO" id="GO:0004525">
    <property type="term" value="F:ribonuclease III activity"/>
    <property type="evidence" value="ECO:0007669"/>
    <property type="project" value="UniProtKB-UniRule"/>
</dbReference>
<dbReference type="GO" id="GO:0019843">
    <property type="term" value="F:rRNA binding"/>
    <property type="evidence" value="ECO:0007669"/>
    <property type="project" value="UniProtKB-KW"/>
</dbReference>
<dbReference type="GO" id="GO:0006397">
    <property type="term" value="P:mRNA processing"/>
    <property type="evidence" value="ECO:0007669"/>
    <property type="project" value="UniProtKB-UniRule"/>
</dbReference>
<dbReference type="GO" id="GO:0010468">
    <property type="term" value="P:regulation of gene expression"/>
    <property type="evidence" value="ECO:0007669"/>
    <property type="project" value="TreeGrafter"/>
</dbReference>
<dbReference type="GO" id="GO:0006364">
    <property type="term" value="P:rRNA processing"/>
    <property type="evidence" value="ECO:0007669"/>
    <property type="project" value="UniProtKB-UniRule"/>
</dbReference>
<dbReference type="GO" id="GO:0008033">
    <property type="term" value="P:tRNA processing"/>
    <property type="evidence" value="ECO:0007669"/>
    <property type="project" value="UniProtKB-KW"/>
</dbReference>
<dbReference type="CDD" id="cd10845">
    <property type="entry name" value="DSRM_RNAse_III_family"/>
    <property type="match status" value="1"/>
</dbReference>
<dbReference type="CDD" id="cd00593">
    <property type="entry name" value="RIBOc"/>
    <property type="match status" value="1"/>
</dbReference>
<dbReference type="FunFam" id="1.10.1520.10:FF:000001">
    <property type="entry name" value="Ribonuclease 3"/>
    <property type="match status" value="1"/>
</dbReference>
<dbReference type="FunFam" id="3.30.160.20:FF:000003">
    <property type="entry name" value="Ribonuclease 3"/>
    <property type="match status" value="1"/>
</dbReference>
<dbReference type="Gene3D" id="3.30.160.20">
    <property type="match status" value="1"/>
</dbReference>
<dbReference type="Gene3D" id="1.10.1520.10">
    <property type="entry name" value="Ribonuclease III domain"/>
    <property type="match status" value="1"/>
</dbReference>
<dbReference type="HAMAP" id="MF_00104">
    <property type="entry name" value="RNase_III"/>
    <property type="match status" value="1"/>
</dbReference>
<dbReference type="InterPro" id="IPR014720">
    <property type="entry name" value="dsRBD_dom"/>
</dbReference>
<dbReference type="InterPro" id="IPR011907">
    <property type="entry name" value="RNase_III"/>
</dbReference>
<dbReference type="InterPro" id="IPR000999">
    <property type="entry name" value="RNase_III_dom"/>
</dbReference>
<dbReference type="InterPro" id="IPR036389">
    <property type="entry name" value="RNase_III_sf"/>
</dbReference>
<dbReference type="NCBIfam" id="TIGR02191">
    <property type="entry name" value="RNaseIII"/>
    <property type="match status" value="1"/>
</dbReference>
<dbReference type="PANTHER" id="PTHR11207:SF0">
    <property type="entry name" value="RIBONUCLEASE 3"/>
    <property type="match status" value="1"/>
</dbReference>
<dbReference type="PANTHER" id="PTHR11207">
    <property type="entry name" value="RIBONUCLEASE III"/>
    <property type="match status" value="1"/>
</dbReference>
<dbReference type="Pfam" id="PF00035">
    <property type="entry name" value="dsrm"/>
    <property type="match status" value="1"/>
</dbReference>
<dbReference type="Pfam" id="PF14622">
    <property type="entry name" value="Ribonucleas_3_3"/>
    <property type="match status" value="1"/>
</dbReference>
<dbReference type="SMART" id="SM00358">
    <property type="entry name" value="DSRM"/>
    <property type="match status" value="1"/>
</dbReference>
<dbReference type="SMART" id="SM00535">
    <property type="entry name" value="RIBOc"/>
    <property type="match status" value="1"/>
</dbReference>
<dbReference type="SUPFAM" id="SSF54768">
    <property type="entry name" value="dsRNA-binding domain-like"/>
    <property type="match status" value="1"/>
</dbReference>
<dbReference type="SUPFAM" id="SSF69065">
    <property type="entry name" value="RNase III domain-like"/>
    <property type="match status" value="1"/>
</dbReference>
<dbReference type="PROSITE" id="PS50137">
    <property type="entry name" value="DS_RBD"/>
    <property type="match status" value="1"/>
</dbReference>
<dbReference type="PROSITE" id="PS00517">
    <property type="entry name" value="RNASE_3_1"/>
    <property type="match status" value="1"/>
</dbReference>
<dbReference type="PROSITE" id="PS50142">
    <property type="entry name" value="RNASE_3_2"/>
    <property type="match status" value="1"/>
</dbReference>
<reference key="1">
    <citation type="submission" date="2007-08" db="EMBL/GenBank/DDBJ databases">
        <authorList>
            <consortium name="The Vibrio harveyi Genome Sequencing Project"/>
            <person name="Bassler B."/>
            <person name="Clifton S.W."/>
            <person name="Fulton L."/>
            <person name="Delehaunty K."/>
            <person name="Fronick C."/>
            <person name="Harrison M."/>
            <person name="Markivic C."/>
            <person name="Fulton R."/>
            <person name="Tin-Wollam A.-M."/>
            <person name="Shah N."/>
            <person name="Pepin K."/>
            <person name="Nash W."/>
            <person name="Thiruvilangam P."/>
            <person name="Bhonagiri V."/>
            <person name="Waters C."/>
            <person name="Tu K.C."/>
            <person name="Irgon J."/>
            <person name="Wilson R.K."/>
        </authorList>
    </citation>
    <scope>NUCLEOTIDE SEQUENCE [LARGE SCALE GENOMIC DNA]</scope>
    <source>
        <strain>ATCC BAA-1116 / BB120</strain>
    </source>
</reference>
<organism>
    <name type="scientific">Vibrio campbellii (strain ATCC BAA-1116)</name>
    <dbReference type="NCBI Taxonomy" id="2902295"/>
    <lineage>
        <taxon>Bacteria</taxon>
        <taxon>Pseudomonadati</taxon>
        <taxon>Pseudomonadota</taxon>
        <taxon>Gammaproteobacteria</taxon>
        <taxon>Vibrionales</taxon>
        <taxon>Vibrionaceae</taxon>
        <taxon>Vibrio</taxon>
    </lineage>
</organism>
<protein>
    <recommendedName>
        <fullName evidence="1">Ribonuclease 3</fullName>
        <ecNumber evidence="1">3.1.26.3</ecNumber>
    </recommendedName>
    <alternativeName>
        <fullName evidence="1">Ribonuclease III</fullName>
        <shortName evidence="1">RNase III</shortName>
    </alternativeName>
</protein>
<feature type="chain" id="PRO_1000075849" description="Ribonuclease 3">
    <location>
        <begin position="1"/>
        <end position="225"/>
    </location>
</feature>
<feature type="domain" description="RNase III" evidence="1">
    <location>
        <begin position="5"/>
        <end position="127"/>
    </location>
</feature>
<feature type="domain" description="DRBM" evidence="1">
    <location>
        <begin position="154"/>
        <end position="224"/>
    </location>
</feature>
<feature type="active site" evidence="1">
    <location>
        <position position="44"/>
    </location>
</feature>
<feature type="active site" evidence="1">
    <location>
        <position position="116"/>
    </location>
</feature>
<feature type="binding site" evidence="1">
    <location>
        <position position="40"/>
    </location>
    <ligand>
        <name>Mg(2+)</name>
        <dbReference type="ChEBI" id="CHEBI:18420"/>
    </ligand>
</feature>
<feature type="binding site" evidence="1">
    <location>
        <position position="113"/>
    </location>
    <ligand>
        <name>Mg(2+)</name>
        <dbReference type="ChEBI" id="CHEBI:18420"/>
    </ligand>
</feature>
<feature type="binding site" evidence="1">
    <location>
        <position position="116"/>
    </location>
    <ligand>
        <name>Mg(2+)</name>
        <dbReference type="ChEBI" id="CHEBI:18420"/>
    </ligand>
</feature>
<name>RNC_VIBC1</name>